<organism>
    <name type="scientific">Listeria monocytogenes serotype 4b (strain CLIP80459)</name>
    <dbReference type="NCBI Taxonomy" id="568819"/>
    <lineage>
        <taxon>Bacteria</taxon>
        <taxon>Bacillati</taxon>
        <taxon>Bacillota</taxon>
        <taxon>Bacilli</taxon>
        <taxon>Bacillales</taxon>
        <taxon>Listeriaceae</taxon>
        <taxon>Listeria</taxon>
    </lineage>
</organism>
<proteinExistence type="inferred from homology"/>
<name>RS18_LISMC</name>
<comment type="function">
    <text evidence="1">Binds as a heterodimer with protein bS6 to the central domain of the 16S rRNA, where it helps stabilize the platform of the 30S subunit.</text>
</comment>
<comment type="subunit">
    <text evidence="1">Part of the 30S ribosomal subunit. Forms a tight heterodimer with protein bS6.</text>
</comment>
<comment type="similarity">
    <text evidence="1">Belongs to the bacterial ribosomal protein bS18 family.</text>
</comment>
<feature type="chain" id="PRO_1000204731" description="Small ribosomal subunit protein bS18">
    <location>
        <begin position="1"/>
        <end position="79"/>
    </location>
</feature>
<keyword id="KW-0687">Ribonucleoprotein</keyword>
<keyword id="KW-0689">Ribosomal protein</keyword>
<keyword id="KW-0694">RNA-binding</keyword>
<keyword id="KW-0699">rRNA-binding</keyword>
<reference key="1">
    <citation type="journal article" date="2012" name="BMC Genomics">
        <title>Comparative genomics and transcriptomics of lineages I, II, and III strains of Listeria monocytogenes.</title>
        <authorList>
            <person name="Hain T."/>
            <person name="Ghai R."/>
            <person name="Billion A."/>
            <person name="Kuenne C.T."/>
            <person name="Steinweg C."/>
            <person name="Izar B."/>
            <person name="Mohamed W."/>
            <person name="Mraheil M."/>
            <person name="Domann E."/>
            <person name="Schaffrath S."/>
            <person name="Karst U."/>
            <person name="Goesmann A."/>
            <person name="Oehm S."/>
            <person name="Puhler A."/>
            <person name="Merkl R."/>
            <person name="Vorwerk S."/>
            <person name="Glaser P."/>
            <person name="Garrido P."/>
            <person name="Rusniok C."/>
            <person name="Buchrieser C."/>
            <person name="Goebel W."/>
            <person name="Chakraborty T."/>
        </authorList>
    </citation>
    <scope>NUCLEOTIDE SEQUENCE [LARGE SCALE GENOMIC DNA]</scope>
    <source>
        <strain>CLIP80459</strain>
    </source>
</reference>
<protein>
    <recommendedName>
        <fullName evidence="1">Small ribosomal subunit protein bS18</fullName>
    </recommendedName>
    <alternativeName>
        <fullName evidence="2">30S ribosomal protein S18</fullName>
    </alternativeName>
</protein>
<evidence type="ECO:0000255" key="1">
    <source>
        <dbReference type="HAMAP-Rule" id="MF_00270"/>
    </source>
</evidence>
<evidence type="ECO:0000305" key="2"/>
<gene>
    <name evidence="1" type="primary">rpsR</name>
    <name type="ordered locus">Lm4b_00055</name>
</gene>
<dbReference type="EMBL" id="FM242711">
    <property type="protein sequence ID" value="CAS03845.1"/>
    <property type="molecule type" value="Genomic_DNA"/>
</dbReference>
<dbReference type="RefSeq" id="WP_003721669.1">
    <property type="nucleotide sequence ID" value="NC_012488.1"/>
</dbReference>
<dbReference type="SMR" id="C1KV87"/>
<dbReference type="GeneID" id="93237944"/>
<dbReference type="KEGG" id="lmc:Lm4b_00055"/>
<dbReference type="HOGENOM" id="CLU_148710_2_2_9"/>
<dbReference type="GO" id="GO:0022627">
    <property type="term" value="C:cytosolic small ribosomal subunit"/>
    <property type="evidence" value="ECO:0007669"/>
    <property type="project" value="TreeGrafter"/>
</dbReference>
<dbReference type="GO" id="GO:0070181">
    <property type="term" value="F:small ribosomal subunit rRNA binding"/>
    <property type="evidence" value="ECO:0007669"/>
    <property type="project" value="TreeGrafter"/>
</dbReference>
<dbReference type="GO" id="GO:0003735">
    <property type="term" value="F:structural constituent of ribosome"/>
    <property type="evidence" value="ECO:0007669"/>
    <property type="project" value="InterPro"/>
</dbReference>
<dbReference type="GO" id="GO:0006412">
    <property type="term" value="P:translation"/>
    <property type="evidence" value="ECO:0007669"/>
    <property type="project" value="UniProtKB-UniRule"/>
</dbReference>
<dbReference type="FunFam" id="4.10.640.10:FF:000003">
    <property type="entry name" value="30S ribosomal protein S18"/>
    <property type="match status" value="1"/>
</dbReference>
<dbReference type="Gene3D" id="4.10.640.10">
    <property type="entry name" value="Ribosomal protein S18"/>
    <property type="match status" value="1"/>
</dbReference>
<dbReference type="HAMAP" id="MF_00270">
    <property type="entry name" value="Ribosomal_bS18"/>
    <property type="match status" value="1"/>
</dbReference>
<dbReference type="InterPro" id="IPR001648">
    <property type="entry name" value="Ribosomal_bS18"/>
</dbReference>
<dbReference type="InterPro" id="IPR018275">
    <property type="entry name" value="Ribosomal_bS18_CS"/>
</dbReference>
<dbReference type="InterPro" id="IPR036870">
    <property type="entry name" value="Ribosomal_bS18_sf"/>
</dbReference>
<dbReference type="NCBIfam" id="TIGR00165">
    <property type="entry name" value="S18"/>
    <property type="match status" value="1"/>
</dbReference>
<dbReference type="PANTHER" id="PTHR13479">
    <property type="entry name" value="30S RIBOSOMAL PROTEIN S18"/>
    <property type="match status" value="1"/>
</dbReference>
<dbReference type="PANTHER" id="PTHR13479:SF40">
    <property type="entry name" value="SMALL RIBOSOMAL SUBUNIT PROTEIN BS18M"/>
    <property type="match status" value="1"/>
</dbReference>
<dbReference type="Pfam" id="PF01084">
    <property type="entry name" value="Ribosomal_S18"/>
    <property type="match status" value="1"/>
</dbReference>
<dbReference type="PRINTS" id="PR00974">
    <property type="entry name" value="RIBOSOMALS18"/>
</dbReference>
<dbReference type="SUPFAM" id="SSF46911">
    <property type="entry name" value="Ribosomal protein S18"/>
    <property type="match status" value="1"/>
</dbReference>
<dbReference type="PROSITE" id="PS00057">
    <property type="entry name" value="RIBOSOMAL_S18"/>
    <property type="match status" value="1"/>
</dbReference>
<sequence>MAGGRRGGRRRKKVCYFTSNGITHIDYKDVELLKKFVSERGKILPRRVTGTSAKYQRKLTVAIKRSRQMALLPFVAEEK</sequence>
<accession>C1KV87</accession>